<accession>P19298</accession>
<organism>
    <name type="scientific">Thermoproteus tenax virus 1 (strain KRA1)</name>
    <name type="common">TTV1</name>
    <dbReference type="NCBI Taxonomy" id="10480"/>
    <lineage>
        <taxon>Viruses</taxon>
        <taxon>Adnaviria</taxon>
        <taxon>Zilligvirae</taxon>
        <taxon>Taleaviricota</taxon>
        <taxon>Tokiviricetes</taxon>
        <taxon>Primavirales</taxon>
        <taxon>Tristromaviridae</taxon>
        <taxon>Betatristromavirus</taxon>
        <taxon>Betatristromavirus TTV1</taxon>
    </lineage>
</organism>
<protein>
    <recommendedName>
        <fullName>Uncharacterized 8.3 kDa protein</fullName>
    </recommendedName>
</protein>
<dbReference type="EMBL" id="X14855">
    <property type="protein sequence ID" value="CAA32994.1"/>
    <property type="molecule type" value="Genomic_DNA"/>
</dbReference>
<dbReference type="Proteomes" id="UP000009250">
    <property type="component" value="Genome"/>
</dbReference>
<name>YORN_TTV1K</name>
<proteinExistence type="predicted"/>
<keyword id="KW-1185">Reference proteome</keyword>
<sequence>MKYIFISYTYYHSYSISIGIYALLCFTLFLLLPLIDTPRYPRTTYYQRNAATVAQLVCTLTFVCPLKLRVG</sequence>
<feature type="chain" id="PRO_0000222980" description="Uncharacterized 8.3 kDa protein">
    <location>
        <begin position="1"/>
        <end position="71"/>
    </location>
</feature>
<reference key="1">
    <citation type="submission" date="1989-03" db="EMBL/GenBank/DDBJ databases">
        <authorList>
            <person name="Neumann H."/>
        </authorList>
    </citation>
    <scope>NUCLEOTIDE SEQUENCE [GENOMIC DNA]</scope>
</reference>
<organismHost>
    <name type="scientific">Thermoproteus tenax</name>
    <dbReference type="NCBI Taxonomy" id="2271"/>
</organismHost>